<organism>
    <name type="scientific">Actinobacillus pleuropneumoniae serotype 5b (strain L20)</name>
    <dbReference type="NCBI Taxonomy" id="416269"/>
    <lineage>
        <taxon>Bacteria</taxon>
        <taxon>Pseudomonadati</taxon>
        <taxon>Pseudomonadota</taxon>
        <taxon>Gammaproteobacteria</taxon>
        <taxon>Pasteurellales</taxon>
        <taxon>Pasteurellaceae</taxon>
        <taxon>Actinobacillus</taxon>
    </lineage>
</organism>
<proteinExistence type="inferred from homology"/>
<protein>
    <recommendedName>
        <fullName evidence="1">Large ribosomal subunit protein uL16</fullName>
    </recommendedName>
    <alternativeName>
        <fullName evidence="2">50S ribosomal protein L16</fullName>
    </alternativeName>
</protein>
<evidence type="ECO:0000255" key="1">
    <source>
        <dbReference type="HAMAP-Rule" id="MF_01342"/>
    </source>
</evidence>
<evidence type="ECO:0000305" key="2"/>
<accession>A3N365</accession>
<gene>
    <name evidence="1" type="primary">rplP</name>
    <name type="ordered locus">APL_1767</name>
</gene>
<name>RL16_ACTP2</name>
<comment type="function">
    <text evidence="1">Binds 23S rRNA and is also seen to make contacts with the A and possibly P site tRNAs.</text>
</comment>
<comment type="subunit">
    <text evidence="1">Part of the 50S ribosomal subunit.</text>
</comment>
<comment type="similarity">
    <text evidence="1">Belongs to the universal ribosomal protein uL16 family.</text>
</comment>
<dbReference type="EMBL" id="CP000569">
    <property type="protein sequence ID" value="ABN74851.1"/>
    <property type="molecule type" value="Genomic_DNA"/>
</dbReference>
<dbReference type="RefSeq" id="WP_005599294.1">
    <property type="nucleotide sequence ID" value="NC_009053.1"/>
</dbReference>
<dbReference type="SMR" id="A3N365"/>
<dbReference type="STRING" id="416269.APL_1767"/>
<dbReference type="EnsemblBacteria" id="ABN74851">
    <property type="protein sequence ID" value="ABN74851"/>
    <property type="gene ID" value="APL_1767"/>
</dbReference>
<dbReference type="GeneID" id="48600059"/>
<dbReference type="KEGG" id="apl:APL_1767"/>
<dbReference type="eggNOG" id="COG0197">
    <property type="taxonomic scope" value="Bacteria"/>
</dbReference>
<dbReference type="HOGENOM" id="CLU_078858_2_1_6"/>
<dbReference type="Proteomes" id="UP000001432">
    <property type="component" value="Chromosome"/>
</dbReference>
<dbReference type="GO" id="GO:0022625">
    <property type="term" value="C:cytosolic large ribosomal subunit"/>
    <property type="evidence" value="ECO:0007669"/>
    <property type="project" value="TreeGrafter"/>
</dbReference>
<dbReference type="GO" id="GO:0019843">
    <property type="term" value="F:rRNA binding"/>
    <property type="evidence" value="ECO:0007669"/>
    <property type="project" value="UniProtKB-UniRule"/>
</dbReference>
<dbReference type="GO" id="GO:0003735">
    <property type="term" value="F:structural constituent of ribosome"/>
    <property type="evidence" value="ECO:0007669"/>
    <property type="project" value="InterPro"/>
</dbReference>
<dbReference type="GO" id="GO:0000049">
    <property type="term" value="F:tRNA binding"/>
    <property type="evidence" value="ECO:0007669"/>
    <property type="project" value="UniProtKB-KW"/>
</dbReference>
<dbReference type="GO" id="GO:0006412">
    <property type="term" value="P:translation"/>
    <property type="evidence" value="ECO:0007669"/>
    <property type="project" value="UniProtKB-UniRule"/>
</dbReference>
<dbReference type="CDD" id="cd01433">
    <property type="entry name" value="Ribosomal_L16_L10e"/>
    <property type="match status" value="1"/>
</dbReference>
<dbReference type="FunFam" id="3.90.1170.10:FF:000001">
    <property type="entry name" value="50S ribosomal protein L16"/>
    <property type="match status" value="1"/>
</dbReference>
<dbReference type="Gene3D" id="3.90.1170.10">
    <property type="entry name" value="Ribosomal protein L10e/L16"/>
    <property type="match status" value="1"/>
</dbReference>
<dbReference type="HAMAP" id="MF_01342">
    <property type="entry name" value="Ribosomal_uL16"/>
    <property type="match status" value="1"/>
</dbReference>
<dbReference type="InterPro" id="IPR047873">
    <property type="entry name" value="Ribosomal_uL16"/>
</dbReference>
<dbReference type="InterPro" id="IPR000114">
    <property type="entry name" value="Ribosomal_uL16_bact-type"/>
</dbReference>
<dbReference type="InterPro" id="IPR020798">
    <property type="entry name" value="Ribosomal_uL16_CS"/>
</dbReference>
<dbReference type="InterPro" id="IPR016180">
    <property type="entry name" value="Ribosomal_uL16_dom"/>
</dbReference>
<dbReference type="InterPro" id="IPR036920">
    <property type="entry name" value="Ribosomal_uL16_sf"/>
</dbReference>
<dbReference type="NCBIfam" id="TIGR01164">
    <property type="entry name" value="rplP_bact"/>
    <property type="match status" value="1"/>
</dbReference>
<dbReference type="PANTHER" id="PTHR12220">
    <property type="entry name" value="50S/60S RIBOSOMAL PROTEIN L16"/>
    <property type="match status" value="1"/>
</dbReference>
<dbReference type="PANTHER" id="PTHR12220:SF13">
    <property type="entry name" value="LARGE RIBOSOMAL SUBUNIT PROTEIN UL16M"/>
    <property type="match status" value="1"/>
</dbReference>
<dbReference type="Pfam" id="PF00252">
    <property type="entry name" value="Ribosomal_L16"/>
    <property type="match status" value="1"/>
</dbReference>
<dbReference type="PRINTS" id="PR00060">
    <property type="entry name" value="RIBOSOMALL16"/>
</dbReference>
<dbReference type="SUPFAM" id="SSF54686">
    <property type="entry name" value="Ribosomal protein L16p/L10e"/>
    <property type="match status" value="1"/>
</dbReference>
<dbReference type="PROSITE" id="PS00586">
    <property type="entry name" value="RIBOSOMAL_L16_1"/>
    <property type="match status" value="1"/>
</dbReference>
<dbReference type="PROSITE" id="PS00701">
    <property type="entry name" value="RIBOSOMAL_L16_2"/>
    <property type="match status" value="1"/>
</dbReference>
<sequence>MLQPKRTKFRKVHKGRNRGIAGGTEVSFGTFGLKAVGRCRLTARQIEAARRAMTRAVKRQGKIWIRVFPDKPITEKPLEVRMGKGKGNVEYWVALIQPGKVLYEMDGVSEEIARHAFALAAAKLPVKTTFVTKTVM</sequence>
<reference key="1">
    <citation type="journal article" date="2008" name="J. Bacteriol.">
        <title>The complete genome sequence of Actinobacillus pleuropneumoniae L20 (serotype 5b).</title>
        <authorList>
            <person name="Foote S.J."/>
            <person name="Bosse J.T."/>
            <person name="Bouevitch A.B."/>
            <person name="Langford P.R."/>
            <person name="Young N.M."/>
            <person name="Nash J.H.E."/>
        </authorList>
    </citation>
    <scope>NUCLEOTIDE SEQUENCE [LARGE SCALE GENOMIC DNA]</scope>
    <source>
        <strain>L20</strain>
    </source>
</reference>
<feature type="chain" id="PRO_1000054571" description="Large ribosomal subunit protein uL16">
    <location>
        <begin position="1"/>
        <end position="136"/>
    </location>
</feature>
<keyword id="KW-1185">Reference proteome</keyword>
<keyword id="KW-0687">Ribonucleoprotein</keyword>
<keyword id="KW-0689">Ribosomal protein</keyword>
<keyword id="KW-0694">RNA-binding</keyword>
<keyword id="KW-0699">rRNA-binding</keyword>
<keyword id="KW-0820">tRNA-binding</keyword>